<evidence type="ECO:0000255" key="1">
    <source>
        <dbReference type="PROSITE-ProRule" id="PRU00186"/>
    </source>
</evidence>
<evidence type="ECO:0000256" key="2">
    <source>
        <dbReference type="SAM" id="MobiDB-lite"/>
    </source>
</evidence>
<evidence type="ECO:0000269" key="3">
    <source>
    </source>
</evidence>
<evidence type="ECO:0000269" key="4">
    <source>
    </source>
</evidence>
<evidence type="ECO:0000269" key="5">
    <source>
    </source>
</evidence>
<evidence type="ECO:0000269" key="6">
    <source>
    </source>
</evidence>
<evidence type="ECO:0000269" key="7">
    <source>
    </source>
</evidence>
<evidence type="ECO:0000269" key="8">
    <source>
    </source>
</evidence>
<evidence type="ECO:0000269" key="9">
    <source>
    </source>
</evidence>
<evidence type="ECO:0000269" key="10">
    <source>
    </source>
</evidence>
<evidence type="ECO:0000269" key="11">
    <source>
    </source>
</evidence>
<evidence type="ECO:0000305" key="12"/>
<accession>Q9FQ08</accession>
<accession>Q9FZ56</accession>
<comment type="function">
    <text evidence="3 5 6 7 11">Single-stranded DNA-dependent ATP-dependent helicase. Involved in DNA non-homologous end joining (NHEJ) required for double-strand break repair. When associated with KU80, binds to double-stranded telomeric and non-telomeric DNA sequences, but not to single-stranded DNA. Plays a role in maintaining telomere length. Acts as a negative regulator of telomerase. Required for maintenance of the telomeric C-rich strand.</text>
</comment>
<comment type="catalytic activity">
    <reaction>
        <text>ATP + H2O = ADP + phosphate + H(+)</text>
        <dbReference type="Rhea" id="RHEA:13065"/>
        <dbReference type="ChEBI" id="CHEBI:15377"/>
        <dbReference type="ChEBI" id="CHEBI:15378"/>
        <dbReference type="ChEBI" id="CHEBI:30616"/>
        <dbReference type="ChEBI" id="CHEBI:43474"/>
        <dbReference type="ChEBI" id="CHEBI:456216"/>
        <dbReference type="EC" id="3.6.4.12"/>
    </reaction>
</comment>
<comment type="subunit">
    <text evidence="3 5 6 8 9 11">Heterodimer with KU80. Interacts with TRP1. Interacts with WEX. Interacts with OFP1.</text>
</comment>
<comment type="interaction">
    <interactant intactId="EBI-476083">
        <id>Q9FQ08</id>
    </interactant>
    <interactant intactId="EBI-476071">
        <id>Q8L7L8</id>
        <label>TRP1</label>
    </interactant>
    <organismsDiffer>false</organismsDiffer>
    <experiments>2</experiments>
</comment>
<comment type="interaction">
    <interactant intactId="EBI-476083">
        <id>Q9FQ08</id>
    </interactant>
    <interactant intactId="EBI-926580">
        <id>Q84LH3</id>
        <label>WEX</label>
    </interactant>
    <organismsDiffer>false</organismsDiffer>
    <experiments>2</experiments>
</comment>
<comment type="subcellular location">
    <subcellularLocation>
        <location evidence="5">Nucleus</location>
    </subcellularLocation>
    <subcellularLocation>
        <location evidence="5">Cytoplasm</location>
    </subcellularLocation>
    <text>Predominantly in the nucleus.</text>
</comment>
<comment type="tissue specificity">
    <text evidence="3 5">Expressed ubiquitously.</text>
</comment>
<comment type="induction">
    <text evidence="5 10">Up-regulated in response to induction of double-strand breaks. Down-regulated by heat shock.</text>
</comment>
<comment type="disruption phenotype">
    <text evidence="3 4 7">No visible phenotype when grown under normal conditions. Hypersensitivity to ionising radiation (IR) and to methylmethane sulfonate (MMS). Longer telomeres.</text>
</comment>
<comment type="similarity">
    <text evidence="12">Belongs to the ku70 family.</text>
</comment>
<comment type="sequence caution" evidence="12">
    <conflict type="erroneous gene model prediction">
        <sequence resource="EMBL-CDS" id="AAF99835"/>
    </conflict>
</comment>
<feature type="chain" id="PRO_0000394130" description="ATP-dependent DNA helicase 2 subunit KU70">
    <location>
        <begin position="1"/>
        <end position="621"/>
    </location>
</feature>
<feature type="domain" description="Ku">
    <location>
        <begin position="273"/>
        <end position="471"/>
    </location>
</feature>
<feature type="domain" description="SAP" evidence="1">
    <location>
        <begin position="585"/>
        <end position="619"/>
    </location>
</feature>
<feature type="region of interest" description="Disordered" evidence="2">
    <location>
        <begin position="1"/>
        <end position="21"/>
    </location>
</feature>
<feature type="region of interest" description="Disordered" evidence="2">
    <location>
        <begin position="545"/>
        <end position="569"/>
    </location>
</feature>
<feature type="compositionally biased region" description="Acidic residues" evidence="2">
    <location>
        <begin position="1"/>
        <end position="20"/>
    </location>
</feature>
<feature type="mutagenesis site" description="Loss of interactions with TRP1 and KU80; when associated with R-319." evidence="8">
    <original>R</original>
    <variation>K</variation>
    <location>
        <position position="117"/>
    </location>
</feature>
<feature type="mutagenesis site" description="Loss of interactions with TRP1 and KU80; when associated with K-117." evidence="8">
    <original>G</original>
    <variation>R</variation>
    <location>
        <position position="319"/>
    </location>
</feature>
<reference key="1">
    <citation type="journal article" date="2002" name="Plant J.">
        <title>Identification of Ku70 and Ku80 homologues in Arabidopsis thaliana: evidence for a role in the repair of DNA double-strand breaks.</title>
        <authorList>
            <person name="Tamura K."/>
            <person name="Adachi Y."/>
            <person name="Chiba K."/>
            <person name="Oguchi K."/>
            <person name="Takahashi H."/>
        </authorList>
    </citation>
    <scope>NUCLEOTIDE SEQUENCE [MRNA]</scope>
    <scope>FUNCTION</scope>
    <scope>INDUCTION</scope>
    <scope>TISSUE SPECIFICITY</scope>
    <scope>SUBCELLULAR LOCATION</scope>
    <scope>INTERACTION WITH KU80</scope>
    <source>
        <strain>cv. Columbia</strain>
    </source>
</reference>
<reference key="2">
    <citation type="journal article" date="2000" name="Nature">
        <title>Sequence and analysis of chromosome 1 of the plant Arabidopsis thaliana.</title>
        <authorList>
            <person name="Theologis A."/>
            <person name="Ecker J.R."/>
            <person name="Palm C.J."/>
            <person name="Federspiel N.A."/>
            <person name="Kaul S."/>
            <person name="White O."/>
            <person name="Alonso J."/>
            <person name="Altafi H."/>
            <person name="Araujo R."/>
            <person name="Bowman C.L."/>
            <person name="Brooks S.Y."/>
            <person name="Buehler E."/>
            <person name="Chan A."/>
            <person name="Chao Q."/>
            <person name="Chen H."/>
            <person name="Cheuk R.F."/>
            <person name="Chin C.W."/>
            <person name="Chung M.K."/>
            <person name="Conn L."/>
            <person name="Conway A.B."/>
            <person name="Conway A.R."/>
            <person name="Creasy T.H."/>
            <person name="Dewar K."/>
            <person name="Dunn P."/>
            <person name="Etgu P."/>
            <person name="Feldblyum T.V."/>
            <person name="Feng J.-D."/>
            <person name="Fong B."/>
            <person name="Fujii C.Y."/>
            <person name="Gill J.E."/>
            <person name="Goldsmith A.D."/>
            <person name="Haas B."/>
            <person name="Hansen N.F."/>
            <person name="Hughes B."/>
            <person name="Huizar L."/>
            <person name="Hunter J.L."/>
            <person name="Jenkins J."/>
            <person name="Johnson-Hopson C."/>
            <person name="Khan S."/>
            <person name="Khaykin E."/>
            <person name="Kim C.J."/>
            <person name="Koo H.L."/>
            <person name="Kremenetskaia I."/>
            <person name="Kurtz D.B."/>
            <person name="Kwan A."/>
            <person name="Lam B."/>
            <person name="Langin-Hooper S."/>
            <person name="Lee A."/>
            <person name="Lee J.M."/>
            <person name="Lenz C.A."/>
            <person name="Li J.H."/>
            <person name="Li Y.-P."/>
            <person name="Lin X."/>
            <person name="Liu S.X."/>
            <person name="Liu Z.A."/>
            <person name="Luros J.S."/>
            <person name="Maiti R."/>
            <person name="Marziali A."/>
            <person name="Militscher J."/>
            <person name="Miranda M."/>
            <person name="Nguyen M."/>
            <person name="Nierman W.C."/>
            <person name="Osborne B.I."/>
            <person name="Pai G."/>
            <person name="Peterson J."/>
            <person name="Pham P.K."/>
            <person name="Rizzo M."/>
            <person name="Rooney T."/>
            <person name="Rowley D."/>
            <person name="Sakano H."/>
            <person name="Salzberg S.L."/>
            <person name="Schwartz J.R."/>
            <person name="Shinn P."/>
            <person name="Southwick A.M."/>
            <person name="Sun H."/>
            <person name="Tallon L.J."/>
            <person name="Tambunga G."/>
            <person name="Toriumi M.J."/>
            <person name="Town C.D."/>
            <person name="Utterback T."/>
            <person name="Van Aken S."/>
            <person name="Vaysberg M."/>
            <person name="Vysotskaia V.S."/>
            <person name="Walker M."/>
            <person name="Wu D."/>
            <person name="Yu G."/>
            <person name="Fraser C.M."/>
            <person name="Venter J.C."/>
            <person name="Davis R.W."/>
        </authorList>
    </citation>
    <scope>NUCLEOTIDE SEQUENCE [LARGE SCALE GENOMIC DNA]</scope>
    <source>
        <strain>cv. Columbia</strain>
    </source>
</reference>
<reference key="3">
    <citation type="journal article" date="2017" name="Plant J.">
        <title>Araport11: a complete reannotation of the Arabidopsis thaliana reference genome.</title>
        <authorList>
            <person name="Cheng C.Y."/>
            <person name="Krishnakumar V."/>
            <person name="Chan A.P."/>
            <person name="Thibaud-Nissen F."/>
            <person name="Schobel S."/>
            <person name="Town C.D."/>
        </authorList>
    </citation>
    <scope>GENOME REANNOTATION</scope>
    <source>
        <strain>cv. Columbia</strain>
    </source>
</reference>
<reference key="4">
    <citation type="submission" date="2005-03" db="EMBL/GenBank/DDBJ databases">
        <title>Large-scale analysis of RIKEN Arabidopsis full-length (RAFL) cDNAs.</title>
        <authorList>
            <person name="Totoki Y."/>
            <person name="Seki M."/>
            <person name="Ishida J."/>
            <person name="Nakajima M."/>
            <person name="Enju A."/>
            <person name="Kamiya A."/>
            <person name="Narusaka M."/>
            <person name="Shin-i T."/>
            <person name="Nakagawa M."/>
            <person name="Sakamoto N."/>
            <person name="Oishi K."/>
            <person name="Kohara Y."/>
            <person name="Kobayashi M."/>
            <person name="Toyoda A."/>
            <person name="Sakaki Y."/>
            <person name="Sakurai T."/>
            <person name="Iida K."/>
            <person name="Akiyama K."/>
            <person name="Satou M."/>
            <person name="Toyoda T."/>
            <person name="Konagaya A."/>
            <person name="Carninci P."/>
            <person name="Kawai J."/>
            <person name="Hayashizaki Y."/>
            <person name="Shinozaki K."/>
        </authorList>
    </citation>
    <scope>NUCLEOTIDE SEQUENCE [LARGE SCALE MRNA]</scope>
    <source>
        <strain>cv. Columbia</strain>
    </source>
</reference>
<reference key="5">
    <citation type="journal article" date="2002" name="EMBO J.">
        <title>Telomere length deregulation and enhanced sensitivity to genotoxic stress in Arabidopsis mutants deficient in Ku70.</title>
        <authorList>
            <person name="Riha K."/>
            <person name="Watson J.M."/>
            <person name="Parkey J."/>
            <person name="Shippen D.E."/>
        </authorList>
    </citation>
    <scope>FUNCTION</scope>
    <scope>TISSUE SPECIFICITY</scope>
    <scope>INTERACTION WITH KU80</scope>
    <scope>DISRUPTION PHENOTYPE</scope>
</reference>
<reference key="6">
    <citation type="journal article" date="2002" name="Nucleic Acids Res.">
        <title>Increased telomere length and hypersensitivity to DNA damaging agents in an Arabidopsis KU70 mutant.</title>
        <authorList>
            <person name="Bundock P."/>
            <person name="van Attikum H."/>
            <person name="Hooykaas P."/>
        </authorList>
    </citation>
    <scope>DISRUPTION PHENOTYPE</scope>
</reference>
<reference key="7">
    <citation type="journal article" date="2002" name="Plant J.">
        <title>Disruption of the Arabidopsis AtKu80 gene demonstrates an essential role for AtKu80 protein in efficient repair of DNA double-strand breaks in vivo.</title>
        <authorList>
            <person name="West C.E."/>
            <person name="Waterworth W.M."/>
            <person name="Story G.W."/>
            <person name="Sunderland P.A."/>
            <person name="Jiang Q."/>
            <person name="Bray C.M."/>
        </authorList>
    </citation>
    <scope>FUNCTION</scope>
    <scope>INTERACTION WITH KU80</scope>
</reference>
<reference key="8">
    <citation type="journal article" date="2003" name="Proc. Natl. Acad. Sci. U.S.A.">
        <title>Ku is required for telomeric C-rich strand maintenance but not for end-to-end chromosome fusions in Arabidopsis.</title>
        <authorList>
            <person name="Riha K."/>
            <person name="Shippen D.E."/>
        </authorList>
    </citation>
    <scope>FUNCTION</scope>
    <scope>DISRUPTION PHENOTYPE</scope>
</reference>
<reference key="9">
    <citation type="journal article" date="2004" name="FEBS Lett.">
        <title>Interactions of putative telomere-binding proteins in Arabidopsis thaliana: identification of functional TRF2 homolog in plants.</title>
        <authorList>
            <person name="Kuchar M."/>
            <person name="Fajkus J."/>
        </authorList>
    </citation>
    <scope>INTERACTION WITH TRP1 AND KU80</scope>
    <scope>MUTAGENESIS OF ARG-117 AND GLY-319</scope>
</reference>
<reference key="10">
    <citation type="journal article" date="2005" name="Nucleic Acids Res.">
        <title>A conserved and species-specific functional interaction between the Werner syndrome-like exonuclease atWEX and the Ku heterodimer in Arabidopsis.</title>
        <authorList>
            <person name="Li B."/>
            <person name="Conway N."/>
            <person name="Navarro S."/>
            <person name="Comai L."/>
            <person name="Comai L."/>
        </authorList>
    </citation>
    <scope>INTERACTION WITH WEX</scope>
</reference>
<reference key="11">
    <citation type="journal article" date="2008" name="Biochim. Biophys. Acta">
        <title>Regulation of Arabidopsis thaliana Ku genes at different developmental stages under heat stress.</title>
        <authorList>
            <person name="Liu P.F."/>
            <person name="Wang Y.K."/>
            <person name="Chang W.C."/>
            <person name="Chang H.Y."/>
            <person name="Pan R.L."/>
        </authorList>
    </citation>
    <scope>INDUCTION BY HEAT SHOCK</scope>
</reference>
<reference key="12">
    <citation type="journal article" date="2009" name="J. Proteomics">
        <title>Phosphoproteomic analysis of nuclei-enriched fractions from Arabidopsis thaliana.</title>
        <authorList>
            <person name="Jones A.M.E."/>
            <person name="MacLean D."/>
            <person name="Studholme D.J."/>
            <person name="Serna-Sanz A."/>
            <person name="Andreasson E."/>
            <person name="Rathjen J.P."/>
            <person name="Peck S.C."/>
        </authorList>
    </citation>
    <scope>IDENTIFICATION BY MASS SPECTROMETRY [LARGE SCALE ANALYSIS]</scope>
    <source>
        <strain>cv. Columbia</strain>
    </source>
</reference>
<reference key="13">
    <citation type="journal article" date="2009" name="Plant Physiol.">
        <title>Large-scale Arabidopsis phosphoproteome profiling reveals novel chloroplast kinase substrates and phosphorylation networks.</title>
        <authorList>
            <person name="Reiland S."/>
            <person name="Messerli G."/>
            <person name="Baerenfaller K."/>
            <person name="Gerrits B."/>
            <person name="Endler A."/>
            <person name="Grossmann J."/>
            <person name="Gruissem W."/>
            <person name="Baginsky S."/>
        </authorList>
    </citation>
    <scope>IDENTIFICATION BY MASS SPECTROMETRY [LARGE SCALE ANALYSIS]</scope>
</reference>
<reference key="14">
    <citation type="journal article" date="2010" name="Plant Mol. Biol.">
        <title>Ovate family protein 1 as a plant Ku70 interacting protein involving in DNA double-strand break repair.</title>
        <authorList>
            <person name="Wang Y.K."/>
            <person name="Chang W.C."/>
            <person name="Liu P.F."/>
            <person name="Hsiao M.K."/>
            <person name="Lin C.T."/>
            <person name="Lin S.M."/>
            <person name="Pan R.L."/>
        </authorList>
    </citation>
    <scope>FUNCTION</scope>
    <scope>INTERACTION WITH OFP1</scope>
</reference>
<name>KU70_ARATH</name>
<protein>
    <recommendedName>
        <fullName>ATP-dependent DNA helicase 2 subunit KU70</fullName>
        <ecNumber>3.6.4.12</ecNumber>
    </recommendedName>
    <alternativeName>
        <fullName>ATP-dependent DNA helicase 2 subunit 1</fullName>
    </alternativeName>
    <alternativeName>
        <fullName>ATP-dependent DNA helicase II 70 kDa subunit</fullName>
    </alternativeName>
</protein>
<keyword id="KW-0067">ATP-binding</keyword>
<keyword id="KW-0963">Cytoplasm</keyword>
<keyword id="KW-0227">DNA damage</keyword>
<keyword id="KW-0233">DNA recombination</keyword>
<keyword id="KW-0234">DNA repair</keyword>
<keyword id="KW-0238">DNA-binding</keyword>
<keyword id="KW-0347">Helicase</keyword>
<keyword id="KW-0378">Hydrolase</keyword>
<keyword id="KW-0547">Nucleotide-binding</keyword>
<keyword id="KW-0539">Nucleus</keyword>
<keyword id="KW-1185">Reference proteome</keyword>
<sequence>MELDPDDVFRDEDEDPENDFFQEKEASKEFVVYLIDASPKMFCSTCPSEEEDKQESHFHIAVSCIAQSLKAHIINRSNDEIAICFFNTREKKNLQDLNGVYVFNVPERDSIDRPTARLIKEFDLIEESFDKEIGSQTGIVSDSRENSLYSALWVAQALLRKGSLKTADKRMFLFTNEDDPFGSMRISVKEDMTRTTLQRAKDAQDLGISIELLPLSQPDKQFNITLFYKDLIGLNSDELTEFMPSVGQKLEDMKDQLKKRVLAKRIAKRITFVICDGLSIELNGYALLRPAIPGSITWLDSTTNLPVKVERSYICTDTGAIMQDPIQRIQPYKNQNIMFTVEELSQVKRISTGHLRLLGFKPLSCLKDYHNLKPSTFLYPSDKEVIGSTRAFIALHRSMIQLERFAVAFYGGTTPPRLVALVAQDEIESDGGQVEPPGINMIYLPYANDIRDIDELHSKPGVAAPRASDDQLKKASALMRRLELKDFSVCQFANPALQRHYAILQAIALDENELRETRDETLPDEEGMNRPAVVKAIEQFKQSIYGDDPDEESDSGAKEKSKKRKAGDADDGKYDYIELAKTGKLKDLTVVELKTYLTANNLLVSGKKEVLINRILTHIGK</sequence>
<dbReference type="EC" id="3.6.4.12"/>
<dbReference type="EMBL" id="AF283759">
    <property type="protein sequence ID" value="AAG44852.1"/>
    <property type="molecule type" value="mRNA"/>
</dbReference>
<dbReference type="EMBL" id="AC051629">
    <property type="protein sequence ID" value="AAF99835.1"/>
    <property type="status" value="ALT_SEQ"/>
    <property type="molecule type" value="Genomic_DNA"/>
</dbReference>
<dbReference type="EMBL" id="CP002684">
    <property type="protein sequence ID" value="AEE29527.1"/>
    <property type="molecule type" value="Genomic_DNA"/>
</dbReference>
<dbReference type="EMBL" id="AK221642">
    <property type="protein sequence ID" value="BAD95294.1"/>
    <property type="molecule type" value="mRNA"/>
</dbReference>
<dbReference type="PIR" id="D86305">
    <property type="entry name" value="D86305"/>
</dbReference>
<dbReference type="RefSeq" id="NP_564012.1">
    <property type="nucleotide sequence ID" value="NM_101558.4"/>
</dbReference>
<dbReference type="SMR" id="Q9FQ08"/>
<dbReference type="BioGRID" id="23508">
    <property type="interactions" value="8"/>
</dbReference>
<dbReference type="FunCoup" id="Q9FQ08">
    <property type="interactions" value="4149"/>
</dbReference>
<dbReference type="IntAct" id="Q9FQ08">
    <property type="interactions" value="3"/>
</dbReference>
<dbReference type="STRING" id="3702.Q9FQ08"/>
<dbReference type="iPTMnet" id="Q9FQ08"/>
<dbReference type="PaxDb" id="3702-AT1G16970.1"/>
<dbReference type="ProteomicsDB" id="237118"/>
<dbReference type="EnsemblPlants" id="AT1G16970.1">
    <property type="protein sequence ID" value="AT1G16970.1"/>
    <property type="gene ID" value="AT1G16970"/>
</dbReference>
<dbReference type="GeneID" id="838268"/>
<dbReference type="Gramene" id="AT1G16970.1">
    <property type="protein sequence ID" value="AT1G16970.1"/>
    <property type="gene ID" value="AT1G16970"/>
</dbReference>
<dbReference type="KEGG" id="ath:AT1G16970"/>
<dbReference type="Araport" id="AT1G16970"/>
<dbReference type="TAIR" id="AT1G16970">
    <property type="gene designation" value="KU70"/>
</dbReference>
<dbReference type="eggNOG" id="KOG2327">
    <property type="taxonomic scope" value="Eukaryota"/>
</dbReference>
<dbReference type="HOGENOM" id="CLU_014815_2_0_1"/>
<dbReference type="InParanoid" id="Q9FQ08"/>
<dbReference type="OMA" id="FWANVKH"/>
<dbReference type="OrthoDB" id="3249161at2759"/>
<dbReference type="PhylomeDB" id="Q9FQ08"/>
<dbReference type="PRO" id="PR:Q9FQ08"/>
<dbReference type="Proteomes" id="UP000006548">
    <property type="component" value="Chromosome 1"/>
</dbReference>
<dbReference type="ExpressionAtlas" id="Q9FQ08">
    <property type="expression patterns" value="baseline and differential"/>
</dbReference>
<dbReference type="GO" id="GO:0005737">
    <property type="term" value="C:cytoplasm"/>
    <property type="evidence" value="ECO:0007669"/>
    <property type="project" value="UniProtKB-SubCell"/>
</dbReference>
<dbReference type="GO" id="GO:0043564">
    <property type="term" value="C:Ku70:Ku80 complex"/>
    <property type="evidence" value="ECO:0007669"/>
    <property type="project" value="InterPro"/>
</dbReference>
<dbReference type="GO" id="GO:0005524">
    <property type="term" value="F:ATP binding"/>
    <property type="evidence" value="ECO:0007669"/>
    <property type="project" value="UniProtKB-KW"/>
</dbReference>
<dbReference type="GO" id="GO:0016887">
    <property type="term" value="F:ATP hydrolysis activity"/>
    <property type="evidence" value="ECO:0007669"/>
    <property type="project" value="RHEA"/>
</dbReference>
<dbReference type="GO" id="GO:0003684">
    <property type="term" value="F:damaged DNA binding"/>
    <property type="evidence" value="ECO:0007669"/>
    <property type="project" value="InterPro"/>
</dbReference>
<dbReference type="GO" id="GO:0003678">
    <property type="term" value="F:DNA helicase activity"/>
    <property type="evidence" value="ECO:0007669"/>
    <property type="project" value="InterPro"/>
</dbReference>
<dbReference type="GO" id="GO:0003690">
    <property type="term" value="F:double-stranded DNA binding"/>
    <property type="evidence" value="ECO:0000314"/>
    <property type="project" value="TAIR"/>
</dbReference>
<dbReference type="GO" id="GO:0042162">
    <property type="term" value="F:telomeric DNA binding"/>
    <property type="evidence" value="ECO:0007669"/>
    <property type="project" value="InterPro"/>
</dbReference>
<dbReference type="GO" id="GO:0006310">
    <property type="term" value="P:DNA recombination"/>
    <property type="evidence" value="ECO:0007669"/>
    <property type="project" value="UniProtKB-KW"/>
</dbReference>
<dbReference type="GO" id="GO:0006281">
    <property type="term" value="P:DNA repair"/>
    <property type="evidence" value="ECO:0000304"/>
    <property type="project" value="TAIR"/>
</dbReference>
<dbReference type="GO" id="GO:0006303">
    <property type="term" value="P:double-strand break repair via nonhomologous end joining"/>
    <property type="evidence" value="ECO:0000315"/>
    <property type="project" value="TAIR"/>
</dbReference>
<dbReference type="GO" id="GO:0009408">
    <property type="term" value="P:response to heat"/>
    <property type="evidence" value="ECO:0000270"/>
    <property type="project" value="TAIR"/>
</dbReference>
<dbReference type="GO" id="GO:0000723">
    <property type="term" value="P:telomere maintenance"/>
    <property type="evidence" value="ECO:0000314"/>
    <property type="project" value="TAIR"/>
</dbReference>
<dbReference type="CDD" id="cd00788">
    <property type="entry name" value="KU70"/>
    <property type="match status" value="1"/>
</dbReference>
<dbReference type="CDD" id="cd01458">
    <property type="entry name" value="vWA_ku"/>
    <property type="match status" value="1"/>
</dbReference>
<dbReference type="FunFam" id="1.10.1600.10:FF:000003">
    <property type="entry name" value="ATP-dependent DNA helicase 2 subunit KU70"/>
    <property type="match status" value="1"/>
</dbReference>
<dbReference type="FunFam" id="1.10.720.30:FF:000021">
    <property type="entry name" value="ATP-dependent DNA helicase 2 subunit KU70"/>
    <property type="match status" value="1"/>
</dbReference>
<dbReference type="FunFam" id="3.40.50.410:FF:000068">
    <property type="entry name" value="ATP-dependent DNA helicase 2 subunit KU70"/>
    <property type="match status" value="1"/>
</dbReference>
<dbReference type="FunFam" id="4.10.970.10:FF:000004">
    <property type="entry name" value="ATP-dependent DNA helicase 2 subunit KU70"/>
    <property type="match status" value="1"/>
</dbReference>
<dbReference type="FunFam" id="2.40.290.10:FF:000001">
    <property type="entry name" value="X-ray repair cross complementing 6"/>
    <property type="match status" value="1"/>
</dbReference>
<dbReference type="Gene3D" id="1.10.1600.10">
    <property type="match status" value="1"/>
</dbReference>
<dbReference type="Gene3D" id="2.40.290.10">
    <property type="match status" value="1"/>
</dbReference>
<dbReference type="Gene3D" id="4.10.970.10">
    <property type="entry name" value="Ku70, bridge and pillars"/>
    <property type="match status" value="1"/>
</dbReference>
<dbReference type="Gene3D" id="1.10.720.30">
    <property type="entry name" value="SAP domain"/>
    <property type="match status" value="1"/>
</dbReference>
<dbReference type="Gene3D" id="3.40.50.410">
    <property type="entry name" value="von Willebrand factor, type A domain"/>
    <property type="match status" value="1"/>
</dbReference>
<dbReference type="InterPro" id="IPR006165">
    <property type="entry name" value="Ku70"/>
</dbReference>
<dbReference type="InterPro" id="IPR006164">
    <property type="entry name" value="Ku70/Ku80_beta-barrel_dom"/>
</dbReference>
<dbReference type="InterPro" id="IPR027388">
    <property type="entry name" value="Ku70_bridge/pillars_dom_sf"/>
</dbReference>
<dbReference type="InterPro" id="IPR047087">
    <property type="entry name" value="KU70_core_dom"/>
</dbReference>
<dbReference type="InterPro" id="IPR005160">
    <property type="entry name" value="Ku_C"/>
</dbReference>
<dbReference type="InterPro" id="IPR005161">
    <property type="entry name" value="Ku_N"/>
</dbReference>
<dbReference type="InterPro" id="IPR003034">
    <property type="entry name" value="SAP_dom"/>
</dbReference>
<dbReference type="InterPro" id="IPR036361">
    <property type="entry name" value="SAP_dom_sf"/>
</dbReference>
<dbReference type="InterPro" id="IPR016194">
    <property type="entry name" value="SPOC-like_C_dom_sf"/>
</dbReference>
<dbReference type="InterPro" id="IPR036465">
    <property type="entry name" value="vWFA_dom_sf"/>
</dbReference>
<dbReference type="NCBIfam" id="TIGR00578">
    <property type="entry name" value="ku70"/>
    <property type="match status" value="1"/>
</dbReference>
<dbReference type="PANTHER" id="PTHR12604">
    <property type="entry name" value="KU AUTOANTIGEN DNA HELICASE"/>
    <property type="match status" value="1"/>
</dbReference>
<dbReference type="PANTHER" id="PTHR12604:SF2">
    <property type="entry name" value="X-RAY REPAIR CROSS-COMPLEMENTING PROTEIN 6"/>
    <property type="match status" value="1"/>
</dbReference>
<dbReference type="Pfam" id="PF02735">
    <property type="entry name" value="Ku"/>
    <property type="match status" value="1"/>
</dbReference>
<dbReference type="Pfam" id="PF03730">
    <property type="entry name" value="Ku_C"/>
    <property type="match status" value="1"/>
</dbReference>
<dbReference type="Pfam" id="PF03731">
    <property type="entry name" value="Ku_N"/>
    <property type="match status" value="1"/>
</dbReference>
<dbReference type="Pfam" id="PF02037">
    <property type="entry name" value="SAP"/>
    <property type="match status" value="1"/>
</dbReference>
<dbReference type="PIRSF" id="PIRSF003033">
    <property type="entry name" value="Ku70"/>
    <property type="match status" value="1"/>
</dbReference>
<dbReference type="SMART" id="SM00559">
    <property type="entry name" value="Ku78"/>
    <property type="match status" value="1"/>
</dbReference>
<dbReference type="SMART" id="SM00513">
    <property type="entry name" value="SAP"/>
    <property type="match status" value="1"/>
</dbReference>
<dbReference type="SUPFAM" id="SSF68906">
    <property type="entry name" value="SAP domain"/>
    <property type="match status" value="1"/>
</dbReference>
<dbReference type="SUPFAM" id="SSF100939">
    <property type="entry name" value="SPOC domain-like"/>
    <property type="match status" value="1"/>
</dbReference>
<dbReference type="SUPFAM" id="SSF53300">
    <property type="entry name" value="vWA-like"/>
    <property type="match status" value="1"/>
</dbReference>
<dbReference type="PROSITE" id="PS50800">
    <property type="entry name" value="SAP"/>
    <property type="match status" value="1"/>
</dbReference>
<proteinExistence type="evidence at protein level"/>
<organism>
    <name type="scientific">Arabidopsis thaliana</name>
    <name type="common">Mouse-ear cress</name>
    <dbReference type="NCBI Taxonomy" id="3702"/>
    <lineage>
        <taxon>Eukaryota</taxon>
        <taxon>Viridiplantae</taxon>
        <taxon>Streptophyta</taxon>
        <taxon>Embryophyta</taxon>
        <taxon>Tracheophyta</taxon>
        <taxon>Spermatophyta</taxon>
        <taxon>Magnoliopsida</taxon>
        <taxon>eudicotyledons</taxon>
        <taxon>Gunneridae</taxon>
        <taxon>Pentapetalae</taxon>
        <taxon>rosids</taxon>
        <taxon>malvids</taxon>
        <taxon>Brassicales</taxon>
        <taxon>Brassicaceae</taxon>
        <taxon>Camelineae</taxon>
        <taxon>Arabidopsis</taxon>
    </lineage>
</organism>
<gene>
    <name type="primary">KU70</name>
    <name type="ordered locus">At1g16970</name>
    <name type="ORF">F6I1.2</name>
</gene>